<sequence>MGETKYIFVTGGVASSLGKGIISSSIGKLLQARGYKVTIQKFDPYINIDPGTLNPYEHGECYVTVDGHEADLDLGHYERFLGIQTTKANNITTGRIYKSVIDKERRGDYLGKTIQVIPHITDEIKRNVKLLGNKYKFDFVITEIGGTVGDIESLPYLESIRQLKWELGQNALCVHLTYVPFLSAAQELKTKPTQHSVKELQSLGVQPDILVLRTEHDLNTNLRKKVALFCNVAENAVVQSIDASTIYEVPLLMQEQGLDETILQKMGLPVGERPPLGPWKDFLNRRANATETVTIAMVGKYVELQDAYKSILESLSQAATYNDRKVKIEYVSSEHLTPDNVDEQLGHVNGVVICPGFGSRGIEGKFVAAKYTREHNIPTFGICLGMQCMAIEFARNVLGYADANSIEMDEKTKHNVIDIMEEQKAITNMGGTMRLGAYECVLKKDSKVYEAYKEEHIQERHRHRYEFNNDYRKQFEEAGMKCVGINPESDLVEIVEIPTLKWYIGTQFHPEYSSTVLHPHPLFVSFIKAAIDK</sequence>
<evidence type="ECO:0000255" key="1">
    <source>
        <dbReference type="HAMAP-Rule" id="MF_01227"/>
    </source>
</evidence>
<feature type="chain" id="PRO_0000266063" description="CTP synthase">
    <location>
        <begin position="1"/>
        <end position="533"/>
    </location>
</feature>
<feature type="domain" description="Glutamine amidotransferase type-1" evidence="1">
    <location>
        <begin position="301"/>
        <end position="533"/>
    </location>
</feature>
<feature type="region of interest" description="Amidoligase domain" evidence="1">
    <location>
        <begin position="1"/>
        <end position="268"/>
    </location>
</feature>
<feature type="active site" description="Nucleophile; for glutamine hydrolysis" evidence="1">
    <location>
        <position position="383"/>
    </location>
</feature>
<feature type="active site" evidence="1">
    <location>
        <position position="509"/>
    </location>
</feature>
<feature type="active site" evidence="1">
    <location>
        <position position="511"/>
    </location>
</feature>
<feature type="binding site" evidence="1">
    <location>
        <position position="15"/>
    </location>
    <ligand>
        <name>CTP</name>
        <dbReference type="ChEBI" id="CHEBI:37563"/>
        <note>allosteric inhibitor</note>
    </ligand>
</feature>
<feature type="binding site" evidence="1">
    <location>
        <position position="15"/>
    </location>
    <ligand>
        <name>UTP</name>
        <dbReference type="ChEBI" id="CHEBI:46398"/>
    </ligand>
</feature>
<feature type="binding site" evidence="1">
    <location>
        <begin position="16"/>
        <end position="21"/>
    </location>
    <ligand>
        <name>ATP</name>
        <dbReference type="ChEBI" id="CHEBI:30616"/>
    </ligand>
</feature>
<feature type="binding site" evidence="1">
    <location>
        <position position="56"/>
    </location>
    <ligand>
        <name>L-glutamine</name>
        <dbReference type="ChEBI" id="CHEBI:58359"/>
    </ligand>
</feature>
<feature type="binding site" evidence="1">
    <location>
        <position position="73"/>
    </location>
    <ligand>
        <name>ATP</name>
        <dbReference type="ChEBI" id="CHEBI:30616"/>
    </ligand>
</feature>
<feature type="binding site" evidence="1">
    <location>
        <position position="73"/>
    </location>
    <ligand>
        <name>Mg(2+)</name>
        <dbReference type="ChEBI" id="CHEBI:18420"/>
    </ligand>
</feature>
<feature type="binding site" evidence="1">
    <location>
        <position position="143"/>
    </location>
    <ligand>
        <name>Mg(2+)</name>
        <dbReference type="ChEBI" id="CHEBI:18420"/>
    </ligand>
</feature>
<feature type="binding site" evidence="1">
    <location>
        <begin position="150"/>
        <end position="152"/>
    </location>
    <ligand>
        <name>CTP</name>
        <dbReference type="ChEBI" id="CHEBI:37563"/>
        <note>allosteric inhibitor</note>
    </ligand>
</feature>
<feature type="binding site" evidence="1">
    <location>
        <begin position="189"/>
        <end position="194"/>
    </location>
    <ligand>
        <name>CTP</name>
        <dbReference type="ChEBI" id="CHEBI:37563"/>
        <note>allosteric inhibitor</note>
    </ligand>
</feature>
<feature type="binding site" evidence="1">
    <location>
        <begin position="189"/>
        <end position="194"/>
    </location>
    <ligand>
        <name>UTP</name>
        <dbReference type="ChEBI" id="CHEBI:46398"/>
    </ligand>
</feature>
<feature type="binding site" evidence="1">
    <location>
        <position position="225"/>
    </location>
    <ligand>
        <name>CTP</name>
        <dbReference type="ChEBI" id="CHEBI:37563"/>
        <note>allosteric inhibitor</note>
    </ligand>
</feature>
<feature type="binding site" evidence="1">
    <location>
        <position position="225"/>
    </location>
    <ligand>
        <name>UTP</name>
        <dbReference type="ChEBI" id="CHEBI:46398"/>
    </ligand>
</feature>
<feature type="binding site" evidence="1">
    <location>
        <position position="356"/>
    </location>
    <ligand>
        <name>L-glutamine</name>
        <dbReference type="ChEBI" id="CHEBI:58359"/>
    </ligand>
</feature>
<feature type="binding site" evidence="1">
    <location>
        <begin position="384"/>
        <end position="387"/>
    </location>
    <ligand>
        <name>L-glutamine</name>
        <dbReference type="ChEBI" id="CHEBI:58359"/>
    </ligand>
</feature>
<feature type="binding site" evidence="1">
    <location>
        <position position="407"/>
    </location>
    <ligand>
        <name>L-glutamine</name>
        <dbReference type="ChEBI" id="CHEBI:58359"/>
    </ligand>
</feature>
<feature type="binding site" evidence="1">
    <location>
        <position position="464"/>
    </location>
    <ligand>
        <name>L-glutamine</name>
        <dbReference type="ChEBI" id="CHEBI:58359"/>
    </ligand>
</feature>
<keyword id="KW-0067">ATP-binding</keyword>
<keyword id="KW-0315">Glutamine amidotransferase</keyword>
<keyword id="KW-0436">Ligase</keyword>
<keyword id="KW-0460">Magnesium</keyword>
<keyword id="KW-0479">Metal-binding</keyword>
<keyword id="KW-0547">Nucleotide-binding</keyword>
<keyword id="KW-0665">Pyrimidine biosynthesis</keyword>
<gene>
    <name evidence="1" type="primary">pyrG</name>
    <name type="synonym">ctrA</name>
    <name type="ordered locus">BF2624</name>
</gene>
<organism>
    <name type="scientific">Bacteroides fragilis (strain ATCC 25285 / DSM 2151 / CCUG 4856 / JCM 11019 / LMG 10263 / NCTC 9343 / Onslow / VPI 2553 / EN-2)</name>
    <dbReference type="NCBI Taxonomy" id="272559"/>
    <lineage>
        <taxon>Bacteria</taxon>
        <taxon>Pseudomonadati</taxon>
        <taxon>Bacteroidota</taxon>
        <taxon>Bacteroidia</taxon>
        <taxon>Bacteroidales</taxon>
        <taxon>Bacteroidaceae</taxon>
        <taxon>Bacteroides</taxon>
    </lineage>
</organism>
<proteinExistence type="inferred from homology"/>
<name>PYRG_BACFN</name>
<comment type="function">
    <text evidence="1">Catalyzes the ATP-dependent amination of UTP to CTP with either L-glutamine or ammonia as the source of nitrogen. Regulates intracellular CTP levels through interactions with the four ribonucleotide triphosphates.</text>
</comment>
<comment type="catalytic activity">
    <reaction evidence="1">
        <text>UTP + L-glutamine + ATP + H2O = CTP + L-glutamate + ADP + phosphate + 2 H(+)</text>
        <dbReference type="Rhea" id="RHEA:26426"/>
        <dbReference type="ChEBI" id="CHEBI:15377"/>
        <dbReference type="ChEBI" id="CHEBI:15378"/>
        <dbReference type="ChEBI" id="CHEBI:29985"/>
        <dbReference type="ChEBI" id="CHEBI:30616"/>
        <dbReference type="ChEBI" id="CHEBI:37563"/>
        <dbReference type="ChEBI" id="CHEBI:43474"/>
        <dbReference type="ChEBI" id="CHEBI:46398"/>
        <dbReference type="ChEBI" id="CHEBI:58359"/>
        <dbReference type="ChEBI" id="CHEBI:456216"/>
        <dbReference type="EC" id="6.3.4.2"/>
    </reaction>
</comment>
<comment type="catalytic activity">
    <reaction evidence="1">
        <text>L-glutamine + H2O = L-glutamate + NH4(+)</text>
        <dbReference type="Rhea" id="RHEA:15889"/>
        <dbReference type="ChEBI" id="CHEBI:15377"/>
        <dbReference type="ChEBI" id="CHEBI:28938"/>
        <dbReference type="ChEBI" id="CHEBI:29985"/>
        <dbReference type="ChEBI" id="CHEBI:58359"/>
    </reaction>
</comment>
<comment type="catalytic activity">
    <reaction evidence="1">
        <text>UTP + NH4(+) + ATP = CTP + ADP + phosphate + 2 H(+)</text>
        <dbReference type="Rhea" id="RHEA:16597"/>
        <dbReference type="ChEBI" id="CHEBI:15378"/>
        <dbReference type="ChEBI" id="CHEBI:28938"/>
        <dbReference type="ChEBI" id="CHEBI:30616"/>
        <dbReference type="ChEBI" id="CHEBI:37563"/>
        <dbReference type="ChEBI" id="CHEBI:43474"/>
        <dbReference type="ChEBI" id="CHEBI:46398"/>
        <dbReference type="ChEBI" id="CHEBI:456216"/>
    </reaction>
</comment>
<comment type="activity regulation">
    <text evidence="1">Allosterically activated by GTP, when glutamine is the substrate; GTP has no effect on the reaction when ammonia is the substrate. The allosteric effector GTP functions by stabilizing the protein conformation that binds the tetrahedral intermediate(s) formed during glutamine hydrolysis. Inhibited by the product CTP, via allosteric rather than competitive inhibition.</text>
</comment>
<comment type="pathway">
    <text evidence="1">Pyrimidine metabolism; CTP biosynthesis via de novo pathway; CTP from UDP: step 2/2.</text>
</comment>
<comment type="subunit">
    <text evidence="1">Homotetramer.</text>
</comment>
<comment type="miscellaneous">
    <text evidence="1">CTPSs have evolved a hybrid strategy for distinguishing between UTP and CTP. The overlapping regions of the product feedback inhibitory and substrate sites recognize a common feature in both compounds, the triphosphate moiety. To differentiate isosteric substrate and product pyrimidine rings, an additional pocket far from the expected kinase/ligase catalytic site, specifically recognizes the cytosine and ribose portions of the product inhibitor.</text>
</comment>
<comment type="similarity">
    <text evidence="1">Belongs to the CTP synthase family.</text>
</comment>
<protein>
    <recommendedName>
        <fullName evidence="1">CTP synthase</fullName>
        <ecNumber evidence="1">6.3.4.2</ecNumber>
    </recommendedName>
    <alternativeName>
        <fullName evidence="1">Cytidine 5'-triphosphate synthase</fullName>
    </alternativeName>
    <alternativeName>
        <fullName evidence="1">Cytidine triphosphate synthetase</fullName>
        <shortName evidence="1">CTP synthetase</shortName>
        <shortName evidence="1">CTPS</shortName>
    </alternativeName>
    <alternativeName>
        <fullName evidence="1">UTP--ammonia ligase</fullName>
    </alternativeName>
</protein>
<reference key="1">
    <citation type="journal article" date="2005" name="Science">
        <title>Extensive DNA inversions in the B. fragilis genome control variable gene expression.</title>
        <authorList>
            <person name="Cerdeno-Tarraga A.-M."/>
            <person name="Patrick S."/>
            <person name="Crossman L.C."/>
            <person name="Blakely G."/>
            <person name="Abratt V."/>
            <person name="Lennard N."/>
            <person name="Poxton I."/>
            <person name="Duerden B."/>
            <person name="Harris B."/>
            <person name="Quail M.A."/>
            <person name="Barron A."/>
            <person name="Clark L."/>
            <person name="Corton C."/>
            <person name="Doggett J."/>
            <person name="Holden M.T.G."/>
            <person name="Larke N."/>
            <person name="Line A."/>
            <person name="Lord A."/>
            <person name="Norbertczak H."/>
            <person name="Ormond D."/>
            <person name="Price C."/>
            <person name="Rabbinowitsch E."/>
            <person name="Woodward J."/>
            <person name="Barrell B.G."/>
            <person name="Parkhill J."/>
        </authorList>
    </citation>
    <scope>NUCLEOTIDE SEQUENCE [LARGE SCALE GENOMIC DNA]</scope>
    <source>
        <strain>ATCC 25285 / DSM 2151 / CCUG 4856 / JCM 11019 / LMG 10263 / NCTC 9343 / Onslow / VPI 2553 / EN-2</strain>
    </source>
</reference>
<dbReference type="EC" id="6.3.4.2" evidence="1"/>
<dbReference type="EMBL" id="CR626927">
    <property type="protein sequence ID" value="CAH08324.1"/>
    <property type="molecule type" value="Genomic_DNA"/>
</dbReference>
<dbReference type="RefSeq" id="WP_005788170.1">
    <property type="nucleotide sequence ID" value="NZ_UFTH01000001.1"/>
</dbReference>
<dbReference type="SMR" id="Q5LC42"/>
<dbReference type="PaxDb" id="272559-BF9343_2543"/>
<dbReference type="KEGG" id="bfs:BF9343_2543"/>
<dbReference type="eggNOG" id="COG0504">
    <property type="taxonomic scope" value="Bacteria"/>
</dbReference>
<dbReference type="HOGENOM" id="CLU_011675_5_0_10"/>
<dbReference type="UniPathway" id="UPA00159">
    <property type="reaction ID" value="UER00277"/>
</dbReference>
<dbReference type="Proteomes" id="UP000006731">
    <property type="component" value="Chromosome"/>
</dbReference>
<dbReference type="GO" id="GO:0005829">
    <property type="term" value="C:cytosol"/>
    <property type="evidence" value="ECO:0007669"/>
    <property type="project" value="TreeGrafter"/>
</dbReference>
<dbReference type="GO" id="GO:0005524">
    <property type="term" value="F:ATP binding"/>
    <property type="evidence" value="ECO:0007669"/>
    <property type="project" value="UniProtKB-KW"/>
</dbReference>
<dbReference type="GO" id="GO:0003883">
    <property type="term" value="F:CTP synthase activity"/>
    <property type="evidence" value="ECO:0007669"/>
    <property type="project" value="UniProtKB-UniRule"/>
</dbReference>
<dbReference type="GO" id="GO:0004359">
    <property type="term" value="F:glutaminase activity"/>
    <property type="evidence" value="ECO:0007669"/>
    <property type="project" value="RHEA"/>
</dbReference>
<dbReference type="GO" id="GO:0042802">
    <property type="term" value="F:identical protein binding"/>
    <property type="evidence" value="ECO:0007669"/>
    <property type="project" value="TreeGrafter"/>
</dbReference>
<dbReference type="GO" id="GO:0046872">
    <property type="term" value="F:metal ion binding"/>
    <property type="evidence" value="ECO:0007669"/>
    <property type="project" value="UniProtKB-KW"/>
</dbReference>
<dbReference type="GO" id="GO:0044210">
    <property type="term" value="P:'de novo' CTP biosynthetic process"/>
    <property type="evidence" value="ECO:0007669"/>
    <property type="project" value="UniProtKB-UniRule"/>
</dbReference>
<dbReference type="GO" id="GO:0019856">
    <property type="term" value="P:pyrimidine nucleobase biosynthetic process"/>
    <property type="evidence" value="ECO:0007669"/>
    <property type="project" value="TreeGrafter"/>
</dbReference>
<dbReference type="CDD" id="cd03113">
    <property type="entry name" value="CTPS_N"/>
    <property type="match status" value="1"/>
</dbReference>
<dbReference type="CDD" id="cd01746">
    <property type="entry name" value="GATase1_CTP_Synthase"/>
    <property type="match status" value="1"/>
</dbReference>
<dbReference type="FunFam" id="3.40.50.300:FF:000009">
    <property type="entry name" value="CTP synthase"/>
    <property type="match status" value="1"/>
</dbReference>
<dbReference type="FunFam" id="3.40.50.880:FF:000002">
    <property type="entry name" value="CTP synthase"/>
    <property type="match status" value="1"/>
</dbReference>
<dbReference type="Gene3D" id="3.40.50.880">
    <property type="match status" value="1"/>
</dbReference>
<dbReference type="Gene3D" id="3.40.50.300">
    <property type="entry name" value="P-loop containing nucleotide triphosphate hydrolases"/>
    <property type="match status" value="1"/>
</dbReference>
<dbReference type="HAMAP" id="MF_01227">
    <property type="entry name" value="PyrG"/>
    <property type="match status" value="1"/>
</dbReference>
<dbReference type="InterPro" id="IPR029062">
    <property type="entry name" value="Class_I_gatase-like"/>
</dbReference>
<dbReference type="InterPro" id="IPR004468">
    <property type="entry name" value="CTP_synthase"/>
</dbReference>
<dbReference type="InterPro" id="IPR017456">
    <property type="entry name" value="CTP_synthase_N"/>
</dbReference>
<dbReference type="InterPro" id="IPR017926">
    <property type="entry name" value="GATASE"/>
</dbReference>
<dbReference type="InterPro" id="IPR033828">
    <property type="entry name" value="GATase1_CTP_Synthase"/>
</dbReference>
<dbReference type="InterPro" id="IPR027417">
    <property type="entry name" value="P-loop_NTPase"/>
</dbReference>
<dbReference type="NCBIfam" id="NF003792">
    <property type="entry name" value="PRK05380.1"/>
    <property type="match status" value="1"/>
</dbReference>
<dbReference type="NCBIfam" id="TIGR00337">
    <property type="entry name" value="PyrG"/>
    <property type="match status" value="1"/>
</dbReference>
<dbReference type="PANTHER" id="PTHR11550">
    <property type="entry name" value="CTP SYNTHASE"/>
    <property type="match status" value="1"/>
</dbReference>
<dbReference type="PANTHER" id="PTHR11550:SF0">
    <property type="entry name" value="CTP SYNTHASE-RELATED"/>
    <property type="match status" value="1"/>
</dbReference>
<dbReference type="Pfam" id="PF06418">
    <property type="entry name" value="CTP_synth_N"/>
    <property type="match status" value="1"/>
</dbReference>
<dbReference type="Pfam" id="PF00117">
    <property type="entry name" value="GATase"/>
    <property type="match status" value="1"/>
</dbReference>
<dbReference type="SUPFAM" id="SSF52317">
    <property type="entry name" value="Class I glutamine amidotransferase-like"/>
    <property type="match status" value="1"/>
</dbReference>
<dbReference type="SUPFAM" id="SSF52540">
    <property type="entry name" value="P-loop containing nucleoside triphosphate hydrolases"/>
    <property type="match status" value="1"/>
</dbReference>
<dbReference type="PROSITE" id="PS51273">
    <property type="entry name" value="GATASE_TYPE_1"/>
    <property type="match status" value="1"/>
</dbReference>
<accession>Q5LC42</accession>